<evidence type="ECO:0000255" key="1">
    <source>
        <dbReference type="HAMAP-Rule" id="MF_00122"/>
    </source>
</evidence>
<reference key="1">
    <citation type="journal article" date="2000" name="Nucleic Acids Res.">
        <title>Complete genome sequence of the alkaliphilic bacterium Bacillus halodurans and genomic sequence comparison with Bacillus subtilis.</title>
        <authorList>
            <person name="Takami H."/>
            <person name="Nakasone K."/>
            <person name="Takaki Y."/>
            <person name="Maeno G."/>
            <person name="Sasaki R."/>
            <person name="Masui N."/>
            <person name="Fuji F."/>
            <person name="Hirama C."/>
            <person name="Nakamura Y."/>
            <person name="Ogasawara N."/>
            <person name="Kuhara S."/>
            <person name="Horikoshi K."/>
        </authorList>
    </citation>
    <scope>NUCLEOTIDE SEQUENCE [LARGE SCALE GENOMIC DNA]</scope>
    <source>
        <strain>ATCC BAA-125 / DSM 18197 / FERM 7344 / JCM 9153 / C-125</strain>
    </source>
</reference>
<organism>
    <name type="scientific">Halalkalibacterium halodurans (strain ATCC BAA-125 / DSM 18197 / FERM 7344 / JCM 9153 / C-125)</name>
    <name type="common">Bacillus halodurans</name>
    <dbReference type="NCBI Taxonomy" id="272558"/>
    <lineage>
        <taxon>Bacteria</taxon>
        <taxon>Bacillati</taxon>
        <taxon>Bacillota</taxon>
        <taxon>Bacilli</taxon>
        <taxon>Bacillales</taxon>
        <taxon>Bacillaceae</taxon>
        <taxon>Halalkalibacterium (ex Joshi et al. 2022)</taxon>
    </lineage>
</organism>
<protein>
    <recommendedName>
        <fullName>Glutamyl-tRNA(Gln) amidotransferase subunit C</fullName>
        <shortName>Glu-ADT subunit C</shortName>
        <ecNumber evidence="1">6.3.5.-</ecNumber>
    </recommendedName>
</protein>
<keyword id="KW-0067">ATP-binding</keyword>
<keyword id="KW-0436">Ligase</keyword>
<keyword id="KW-0547">Nucleotide-binding</keyword>
<keyword id="KW-0648">Protein biosynthesis</keyword>
<keyword id="KW-1185">Reference proteome</keyword>
<comment type="function">
    <text evidence="1">Allows the formation of correctly charged Asn-tRNA(Asn) or Gln-tRNA(Gln) through the transamidation of misacylated Asp-tRNA(Asn) or Glu-tRNA(Gln) in organisms which lack either or both of asparaginyl-tRNA or glutaminyl-tRNA synthetases. The reaction takes place in the presence of glutamine and ATP through an activated phospho-Asp-tRNA(Asn) or phospho-Glu-tRNA(Gln).</text>
</comment>
<comment type="catalytic activity">
    <reaction evidence="1">
        <text>L-glutamyl-tRNA(Gln) + L-glutamine + ATP + H2O = L-glutaminyl-tRNA(Gln) + L-glutamate + ADP + phosphate + H(+)</text>
        <dbReference type="Rhea" id="RHEA:17521"/>
        <dbReference type="Rhea" id="RHEA-COMP:9681"/>
        <dbReference type="Rhea" id="RHEA-COMP:9684"/>
        <dbReference type="ChEBI" id="CHEBI:15377"/>
        <dbReference type="ChEBI" id="CHEBI:15378"/>
        <dbReference type="ChEBI" id="CHEBI:29985"/>
        <dbReference type="ChEBI" id="CHEBI:30616"/>
        <dbReference type="ChEBI" id="CHEBI:43474"/>
        <dbReference type="ChEBI" id="CHEBI:58359"/>
        <dbReference type="ChEBI" id="CHEBI:78520"/>
        <dbReference type="ChEBI" id="CHEBI:78521"/>
        <dbReference type="ChEBI" id="CHEBI:456216"/>
    </reaction>
</comment>
<comment type="catalytic activity">
    <reaction evidence="1">
        <text>L-aspartyl-tRNA(Asn) + L-glutamine + ATP + H2O = L-asparaginyl-tRNA(Asn) + L-glutamate + ADP + phosphate + 2 H(+)</text>
        <dbReference type="Rhea" id="RHEA:14513"/>
        <dbReference type="Rhea" id="RHEA-COMP:9674"/>
        <dbReference type="Rhea" id="RHEA-COMP:9677"/>
        <dbReference type="ChEBI" id="CHEBI:15377"/>
        <dbReference type="ChEBI" id="CHEBI:15378"/>
        <dbReference type="ChEBI" id="CHEBI:29985"/>
        <dbReference type="ChEBI" id="CHEBI:30616"/>
        <dbReference type="ChEBI" id="CHEBI:43474"/>
        <dbReference type="ChEBI" id="CHEBI:58359"/>
        <dbReference type="ChEBI" id="CHEBI:78515"/>
        <dbReference type="ChEBI" id="CHEBI:78516"/>
        <dbReference type="ChEBI" id="CHEBI:456216"/>
    </reaction>
</comment>
<comment type="subunit">
    <text evidence="1">Heterotrimer of A, B and C subunits.</text>
</comment>
<comment type="similarity">
    <text evidence="1">Belongs to the GatC family.</text>
</comment>
<proteinExistence type="inferred from homology"/>
<feature type="chain" id="PRO_0000105274" description="Glutamyl-tRNA(Gln) amidotransferase subunit C">
    <location>
        <begin position="1"/>
        <end position="96"/>
    </location>
</feature>
<gene>
    <name evidence="1" type="primary">gatC</name>
    <name type="ordered locus">BH0665</name>
</gene>
<dbReference type="EC" id="6.3.5.-" evidence="1"/>
<dbReference type="EMBL" id="BA000004">
    <property type="protein sequence ID" value="BAB04384.1"/>
    <property type="molecule type" value="Genomic_DNA"/>
</dbReference>
<dbReference type="PIR" id="A83733">
    <property type="entry name" value="A83733"/>
</dbReference>
<dbReference type="RefSeq" id="WP_010896841.1">
    <property type="nucleotide sequence ID" value="NC_002570.2"/>
</dbReference>
<dbReference type="SMR" id="Q9KF29"/>
<dbReference type="STRING" id="272558.gene:10726539"/>
<dbReference type="GeneID" id="87596233"/>
<dbReference type="KEGG" id="bha:BH0665"/>
<dbReference type="eggNOG" id="COG0721">
    <property type="taxonomic scope" value="Bacteria"/>
</dbReference>
<dbReference type="HOGENOM" id="CLU_105899_6_1_9"/>
<dbReference type="OrthoDB" id="9813938at2"/>
<dbReference type="Proteomes" id="UP000001258">
    <property type="component" value="Chromosome"/>
</dbReference>
<dbReference type="GO" id="GO:0050566">
    <property type="term" value="F:asparaginyl-tRNA synthase (glutamine-hydrolyzing) activity"/>
    <property type="evidence" value="ECO:0007669"/>
    <property type="project" value="RHEA"/>
</dbReference>
<dbReference type="GO" id="GO:0005524">
    <property type="term" value="F:ATP binding"/>
    <property type="evidence" value="ECO:0007669"/>
    <property type="project" value="UniProtKB-KW"/>
</dbReference>
<dbReference type="GO" id="GO:0050567">
    <property type="term" value="F:glutaminyl-tRNA synthase (glutamine-hydrolyzing) activity"/>
    <property type="evidence" value="ECO:0007669"/>
    <property type="project" value="UniProtKB-UniRule"/>
</dbReference>
<dbReference type="GO" id="GO:0070681">
    <property type="term" value="P:glutaminyl-tRNAGln biosynthesis via transamidation"/>
    <property type="evidence" value="ECO:0007669"/>
    <property type="project" value="TreeGrafter"/>
</dbReference>
<dbReference type="GO" id="GO:0006450">
    <property type="term" value="P:regulation of translational fidelity"/>
    <property type="evidence" value="ECO:0007669"/>
    <property type="project" value="InterPro"/>
</dbReference>
<dbReference type="GO" id="GO:0006412">
    <property type="term" value="P:translation"/>
    <property type="evidence" value="ECO:0007669"/>
    <property type="project" value="UniProtKB-UniRule"/>
</dbReference>
<dbReference type="Gene3D" id="1.10.20.60">
    <property type="entry name" value="Glu-tRNAGln amidotransferase C subunit, N-terminal domain"/>
    <property type="match status" value="1"/>
</dbReference>
<dbReference type="HAMAP" id="MF_00122">
    <property type="entry name" value="GatC"/>
    <property type="match status" value="1"/>
</dbReference>
<dbReference type="InterPro" id="IPR036113">
    <property type="entry name" value="Asp/Glu-ADT_sf_sub_c"/>
</dbReference>
<dbReference type="InterPro" id="IPR003837">
    <property type="entry name" value="GatC"/>
</dbReference>
<dbReference type="NCBIfam" id="TIGR00135">
    <property type="entry name" value="gatC"/>
    <property type="match status" value="1"/>
</dbReference>
<dbReference type="PANTHER" id="PTHR15004">
    <property type="entry name" value="GLUTAMYL-TRNA(GLN) AMIDOTRANSFERASE SUBUNIT C, MITOCHONDRIAL"/>
    <property type="match status" value="1"/>
</dbReference>
<dbReference type="PANTHER" id="PTHR15004:SF0">
    <property type="entry name" value="GLUTAMYL-TRNA(GLN) AMIDOTRANSFERASE SUBUNIT C, MITOCHONDRIAL"/>
    <property type="match status" value="1"/>
</dbReference>
<dbReference type="Pfam" id="PF02686">
    <property type="entry name" value="GatC"/>
    <property type="match status" value="1"/>
</dbReference>
<dbReference type="SUPFAM" id="SSF141000">
    <property type="entry name" value="Glu-tRNAGln amidotransferase C subunit"/>
    <property type="match status" value="1"/>
</dbReference>
<accession>Q9KF29</accession>
<name>GATC_HALH5</name>
<sequence>MSRISMEQVKHVAHLARLAITEEEAKLFTEQLGDIIQFAEQLNELDTEGVEPTSHVLDMKNVLREDKPEKGLPVEDVLKNAPDHEDGQIRVPSVLE</sequence>